<sequence>MPAIMTMLADHAARQLLDFSQKLDINLLDNVVNCLYHGEGAQQRMAQEVLTHLKEHPDAWTRVDTILEFSQNMNTKYYGLQILENVIKTRWKILPRNQCEGIKKYVVGLIIKTSSDPTCVEKEKVYIGKLNMILVQILKQEWPKHWPTFISDIVGASRTSESLCQNNMVILKLLSEEVFDFSSGQITQVKAKHLKDSMCNEFSQIFQLCQFVMENSQNAPLVHATLETLLRFLNWIPLGYIFETKLISTLIYKFLNVPMFRNVSLKCLTEIAGVSVSQYEEQFETLFTLTMMQLKQMLPLNTNIRLAYSNGKDDEQNFIQNLSLFLCTFLKEHGQLLEKRLNLREALMEALHYMLLVSEVEETEIFKICLEYWNHLAAELYRESPFSTSASPLLSGSQHFDIPPRRQLYLTVLSKVRLLMVSRMAKPEEVLVVENDQGEVVREFMKDTDSINLYKNMRETLVYLTHLDYVDTEIIMTKKLQNQVNGTEWSWKNLNTLCWAIGSISGAMHEEDEKRFLVTVIKDLLGLCEQKRGKDNKAIIASNIMYIVGQYPRFLRAHWKFLKTVVNKLFEFMHETHDGVQDMACDTFIKIAQKCRRHFVQVQVGEVMPFIDEILNNINTIICDLQPQQVHTFYEAVGYMIGAQTDQTVQEHLIEKYMLLPNQVWDSIIQQATKNVDILKDPETVKQLGSILKTNVRACKAVGHPFVIQLGRIYLDMLNVYKCLSENISAAIQANGEMVTKQPLIRSMRTVKRETLKLISGWVSRSNDPQMVAENFVPPLLDAVLIDYQRNVPAAREPEVLSTMAIIVNKLGGHITAEIPQIFDAVFECTLNMINKDFEEYPEHRTNFFLLLQAVNSHCFPAFLAIPPAQFKLVLDSIIWAFKHTMRNVADTGLQILFTLLQNVAQEEAAAQSFYQTYFCDILQHIFSVVTDTSHTAGLTMHASILAYMFNLVEEGKISTPLNPGNPVNNQMFIQDYVANLLKSAFPHLQDAQVKLFVTGLFSLNQDIPAFKEHLRDFLVQIKEFAGEDTSDLFLEERETALRQAQEEKHKLQMSVPGILNPHEIPEEMCD</sequence>
<proteinExistence type="evidence at protein level"/>
<evidence type="ECO:0000250" key="1"/>
<evidence type="ECO:0000250" key="2">
    <source>
        <dbReference type="UniProtKB" id="O14980"/>
    </source>
</evidence>
<evidence type="ECO:0000250" key="3">
    <source>
        <dbReference type="UniProtKB" id="Q80U96"/>
    </source>
</evidence>
<evidence type="ECO:0000255" key="4">
    <source>
        <dbReference type="PROSITE-ProRule" id="PRU00115"/>
    </source>
</evidence>
<evidence type="ECO:0000269" key="5">
    <source>
    </source>
</evidence>
<evidence type="ECO:0000269" key="6">
    <source>
    </source>
</evidence>
<evidence type="ECO:0000305" key="7"/>
<evidence type="ECO:0007744" key="8">
    <source>
    </source>
</evidence>
<evidence type="ECO:0007829" key="9">
    <source>
        <dbReference type="PDB" id="3GJX"/>
    </source>
</evidence>
<evidence type="ECO:0007829" key="10">
    <source>
        <dbReference type="PDB" id="3NBY"/>
    </source>
</evidence>
<evidence type="ECO:0007829" key="11">
    <source>
        <dbReference type="PDB" id="3NC0"/>
    </source>
</evidence>
<evidence type="ECO:0007829" key="12">
    <source>
        <dbReference type="PDB" id="3NC1"/>
    </source>
</evidence>
<name>XPO1_MOUSE</name>
<dbReference type="EMBL" id="BC062912">
    <property type="protein sequence ID" value="AAH62912.1"/>
    <property type="molecule type" value="mRNA"/>
</dbReference>
<dbReference type="CCDS" id="CCDS24475.1"/>
<dbReference type="RefSeq" id="NP_001030303.1">
    <property type="nucleotide sequence ID" value="NM_001035226.1"/>
</dbReference>
<dbReference type="RefSeq" id="NP_001399335.1">
    <property type="nucleotide sequence ID" value="NM_001412406.1"/>
</dbReference>
<dbReference type="RefSeq" id="NP_001399336.1">
    <property type="nucleotide sequence ID" value="NM_001412407.1"/>
</dbReference>
<dbReference type="RefSeq" id="NP_001399337.1">
    <property type="nucleotide sequence ID" value="NM_001412408.1"/>
</dbReference>
<dbReference type="RefSeq" id="NP_598775.2">
    <property type="nucleotide sequence ID" value="NM_134014.3"/>
</dbReference>
<dbReference type="RefSeq" id="XP_006514493.1">
    <property type="nucleotide sequence ID" value="XM_006514430.2"/>
</dbReference>
<dbReference type="PDB" id="3GJX">
    <property type="method" value="X-ray"/>
    <property type="resolution" value="2.50 A"/>
    <property type="chains" value="A/D=1-1071"/>
</dbReference>
<dbReference type="PDB" id="3NBY">
    <property type="method" value="X-ray"/>
    <property type="resolution" value="3.42 A"/>
    <property type="chains" value="A/D=1-1071"/>
</dbReference>
<dbReference type="PDB" id="3NBZ">
    <property type="method" value="X-ray"/>
    <property type="resolution" value="2.80 A"/>
    <property type="chains" value="A/D=1-1071"/>
</dbReference>
<dbReference type="PDB" id="3NC0">
    <property type="method" value="X-ray"/>
    <property type="resolution" value="2.90 A"/>
    <property type="chains" value="A/D=1-1071"/>
</dbReference>
<dbReference type="PDB" id="3NC1">
    <property type="method" value="X-ray"/>
    <property type="resolution" value="3.35 A"/>
    <property type="chains" value="A=1-1071"/>
</dbReference>
<dbReference type="PDBsum" id="3GJX"/>
<dbReference type="PDBsum" id="3NBY"/>
<dbReference type="PDBsum" id="3NBZ"/>
<dbReference type="PDBsum" id="3NC0"/>
<dbReference type="PDBsum" id="3NC1"/>
<dbReference type="SASBDB" id="Q6P5F9"/>
<dbReference type="SMR" id="Q6P5F9"/>
<dbReference type="BioGRID" id="222117">
    <property type="interactions" value="32"/>
</dbReference>
<dbReference type="CORUM" id="Q6P5F9"/>
<dbReference type="DIP" id="DIP-48612N"/>
<dbReference type="FunCoup" id="Q6P5F9">
    <property type="interactions" value="5264"/>
</dbReference>
<dbReference type="IntAct" id="Q6P5F9">
    <property type="interactions" value="1785"/>
</dbReference>
<dbReference type="STRING" id="10090.ENSMUSP00000099933"/>
<dbReference type="GlyGen" id="Q6P5F9">
    <property type="glycosylation" value="1 site, 1 O-linked glycan (1 site)"/>
</dbReference>
<dbReference type="iPTMnet" id="Q6P5F9"/>
<dbReference type="MetOSite" id="Q6P5F9"/>
<dbReference type="PhosphoSitePlus" id="Q6P5F9"/>
<dbReference type="SwissPalm" id="Q6P5F9"/>
<dbReference type="jPOST" id="Q6P5F9"/>
<dbReference type="PaxDb" id="10090-ENSMUSP00000099933"/>
<dbReference type="PeptideAtlas" id="Q6P5F9"/>
<dbReference type="ProteomicsDB" id="300006"/>
<dbReference type="Pumba" id="Q6P5F9"/>
<dbReference type="Antibodypedia" id="4124">
    <property type="antibodies" value="354 antibodies from 35 providers"/>
</dbReference>
<dbReference type="DNASU" id="103573"/>
<dbReference type="Ensembl" id="ENSMUST00000102869.8">
    <property type="protein sequence ID" value="ENSMUSP00000099933.2"/>
    <property type="gene ID" value="ENSMUSG00000020290.16"/>
</dbReference>
<dbReference type="Ensembl" id="ENSMUST00000102870.8">
    <property type="protein sequence ID" value="ENSMUSP00000099934.2"/>
    <property type="gene ID" value="ENSMUSG00000020290.16"/>
</dbReference>
<dbReference type="GeneID" id="103573"/>
<dbReference type="UCSC" id="uc007iet.1">
    <property type="organism name" value="mouse"/>
</dbReference>
<dbReference type="AGR" id="MGI:2144013"/>
<dbReference type="CTD" id="7514"/>
<dbReference type="MGI" id="MGI:2144013">
    <property type="gene designation" value="Xpo1"/>
</dbReference>
<dbReference type="VEuPathDB" id="HostDB:ENSMUSG00000020290"/>
<dbReference type="eggNOG" id="KOG2020">
    <property type="taxonomic scope" value="Eukaryota"/>
</dbReference>
<dbReference type="GeneTree" id="ENSGT00940000153408"/>
<dbReference type="HOGENOM" id="CLU_011906_0_0_1"/>
<dbReference type="InParanoid" id="Q6P5F9"/>
<dbReference type="OMA" id="WAFKHNN"/>
<dbReference type="OrthoDB" id="27218at2759"/>
<dbReference type="PhylomeDB" id="Q6P5F9"/>
<dbReference type="TreeFam" id="TF105695"/>
<dbReference type="Reactome" id="R-MMU-141444">
    <property type="pathway name" value="Amplification of signal from unattached kinetochores via a MAD2 inhibitory signal"/>
</dbReference>
<dbReference type="Reactome" id="R-MMU-2467813">
    <property type="pathway name" value="Separation of Sister Chromatids"/>
</dbReference>
<dbReference type="Reactome" id="R-MMU-2500257">
    <property type="pathway name" value="Resolution of Sister Chromatid Cohesion"/>
</dbReference>
<dbReference type="Reactome" id="R-MMU-3769402">
    <property type="pathway name" value="Deactivation of the beta-catenin transactivating complex"/>
</dbReference>
<dbReference type="Reactome" id="R-MMU-450520">
    <property type="pathway name" value="HuR (ELAVL1) binds and stabilizes mRNA"/>
</dbReference>
<dbReference type="Reactome" id="R-MMU-5663220">
    <property type="pathway name" value="RHO GTPases Activate Formins"/>
</dbReference>
<dbReference type="Reactome" id="R-MMU-5687128">
    <property type="pathway name" value="MAPK6/MAPK4 signaling"/>
</dbReference>
<dbReference type="Reactome" id="R-MMU-68877">
    <property type="pathway name" value="Mitotic Prometaphase"/>
</dbReference>
<dbReference type="Reactome" id="R-MMU-69273">
    <property type="pathway name" value="Cyclin A/B1/B2 associated events during G2/M transition"/>
</dbReference>
<dbReference type="Reactome" id="R-MMU-9634638">
    <property type="pathway name" value="Estrogen-dependent nuclear events downstream of ESR-membrane signaling"/>
</dbReference>
<dbReference type="Reactome" id="R-MMU-9648025">
    <property type="pathway name" value="EML4 and NUDC in mitotic spindle formation"/>
</dbReference>
<dbReference type="Reactome" id="R-MMU-9707616">
    <property type="pathway name" value="Heme signaling"/>
</dbReference>
<dbReference type="Reactome" id="R-MMU-9856649">
    <property type="pathway name" value="Transcriptional and post-translational regulation of MITF-M expression and activity"/>
</dbReference>
<dbReference type="BioGRID-ORCS" id="103573">
    <property type="hits" value="29 hits in 72 CRISPR screens"/>
</dbReference>
<dbReference type="ChiTaRS" id="Xpo1">
    <property type="organism name" value="mouse"/>
</dbReference>
<dbReference type="EvolutionaryTrace" id="Q6P5F9"/>
<dbReference type="PRO" id="PR:Q6P5F9"/>
<dbReference type="Proteomes" id="UP000000589">
    <property type="component" value="Chromosome 11"/>
</dbReference>
<dbReference type="RNAct" id="Q6P5F9">
    <property type="molecule type" value="protein"/>
</dbReference>
<dbReference type="Bgee" id="ENSMUSG00000020290">
    <property type="expression patterns" value="Expressed in metanephric loop of Henle and 278 other cell types or tissues"/>
</dbReference>
<dbReference type="ExpressionAtlas" id="Q6P5F9">
    <property type="expression patterns" value="baseline and differential"/>
</dbReference>
<dbReference type="GO" id="GO:0005642">
    <property type="term" value="C:annulate lamellae"/>
    <property type="evidence" value="ECO:0007669"/>
    <property type="project" value="Ensembl"/>
</dbReference>
<dbReference type="GO" id="GO:0015030">
    <property type="term" value="C:Cajal body"/>
    <property type="evidence" value="ECO:0007669"/>
    <property type="project" value="UniProtKB-SubCell"/>
</dbReference>
<dbReference type="GO" id="GO:0005829">
    <property type="term" value="C:cytosol"/>
    <property type="evidence" value="ECO:0007669"/>
    <property type="project" value="Ensembl"/>
</dbReference>
<dbReference type="GO" id="GO:0000776">
    <property type="term" value="C:kinetochore"/>
    <property type="evidence" value="ECO:0000250"/>
    <property type="project" value="UniProtKB"/>
</dbReference>
<dbReference type="GO" id="GO:0031965">
    <property type="term" value="C:nuclear membrane"/>
    <property type="evidence" value="ECO:0007669"/>
    <property type="project" value="Ensembl"/>
</dbReference>
<dbReference type="GO" id="GO:0005730">
    <property type="term" value="C:nucleolus"/>
    <property type="evidence" value="ECO:0007669"/>
    <property type="project" value="UniProtKB-SubCell"/>
</dbReference>
<dbReference type="GO" id="GO:0005634">
    <property type="term" value="C:nucleus"/>
    <property type="evidence" value="ECO:0000314"/>
    <property type="project" value="MGI"/>
</dbReference>
<dbReference type="GO" id="GO:1990904">
    <property type="term" value="C:ribonucleoprotein complex"/>
    <property type="evidence" value="ECO:0000266"/>
    <property type="project" value="MGI"/>
</dbReference>
<dbReference type="GO" id="GO:0140297">
    <property type="term" value="F:DNA-binding transcription factor binding"/>
    <property type="evidence" value="ECO:0007669"/>
    <property type="project" value="Ensembl"/>
</dbReference>
<dbReference type="GO" id="GO:0005049">
    <property type="term" value="F:nuclear export signal receptor activity"/>
    <property type="evidence" value="ECO:0000314"/>
    <property type="project" value="MGI"/>
</dbReference>
<dbReference type="GO" id="GO:0019904">
    <property type="term" value="F:protein domain specific binding"/>
    <property type="evidence" value="ECO:0007669"/>
    <property type="project" value="Ensembl"/>
</dbReference>
<dbReference type="GO" id="GO:0003723">
    <property type="term" value="F:RNA binding"/>
    <property type="evidence" value="ECO:0007669"/>
    <property type="project" value="UniProtKB-KW"/>
</dbReference>
<dbReference type="GO" id="GO:0031267">
    <property type="term" value="F:small GTPase binding"/>
    <property type="evidence" value="ECO:0007669"/>
    <property type="project" value="InterPro"/>
</dbReference>
<dbReference type="GO" id="GO:1902075">
    <property type="term" value="P:cellular response to salt"/>
    <property type="evidence" value="ECO:0007669"/>
    <property type="project" value="Ensembl"/>
</dbReference>
<dbReference type="GO" id="GO:0071401">
    <property type="term" value="P:cellular response to triglyceride"/>
    <property type="evidence" value="ECO:0007669"/>
    <property type="project" value="Ensembl"/>
</dbReference>
<dbReference type="GO" id="GO:0006406">
    <property type="term" value="P:mRNA export from nucleus"/>
    <property type="evidence" value="ECO:0000314"/>
    <property type="project" value="UniProt"/>
</dbReference>
<dbReference type="GO" id="GO:0000122">
    <property type="term" value="P:negative regulation of transcription by RNA polymerase II"/>
    <property type="evidence" value="ECO:0007669"/>
    <property type="project" value="Ensembl"/>
</dbReference>
<dbReference type="GO" id="GO:0006611">
    <property type="term" value="P:protein export from nucleus"/>
    <property type="evidence" value="ECO:0000314"/>
    <property type="project" value="MGI"/>
</dbReference>
<dbReference type="GO" id="GO:0034504">
    <property type="term" value="P:protein localization to nucleus"/>
    <property type="evidence" value="ECO:0000315"/>
    <property type="project" value="MGI"/>
</dbReference>
<dbReference type="GO" id="GO:0010824">
    <property type="term" value="P:regulation of centrosome duplication"/>
    <property type="evidence" value="ECO:0000315"/>
    <property type="project" value="MGI"/>
</dbReference>
<dbReference type="GO" id="GO:0032434">
    <property type="term" value="P:regulation of proteasomal ubiquitin-dependent protein catabolic process"/>
    <property type="evidence" value="ECO:0007669"/>
    <property type="project" value="Ensembl"/>
</dbReference>
<dbReference type="GO" id="GO:0042176">
    <property type="term" value="P:regulation of protein catabolic process"/>
    <property type="evidence" value="ECO:0000315"/>
    <property type="project" value="MGI"/>
</dbReference>
<dbReference type="GO" id="GO:0046825">
    <property type="term" value="P:regulation of protein export from nucleus"/>
    <property type="evidence" value="ECO:0000315"/>
    <property type="project" value="MGI"/>
</dbReference>
<dbReference type="GO" id="GO:0009410">
    <property type="term" value="P:response to xenobiotic stimulus"/>
    <property type="evidence" value="ECO:0007669"/>
    <property type="project" value="Ensembl"/>
</dbReference>
<dbReference type="GO" id="GO:0000055">
    <property type="term" value="P:ribosomal large subunit export from nucleus"/>
    <property type="evidence" value="ECO:0007669"/>
    <property type="project" value="Ensembl"/>
</dbReference>
<dbReference type="GO" id="GO:0000056">
    <property type="term" value="P:ribosomal small subunit export from nucleus"/>
    <property type="evidence" value="ECO:0007669"/>
    <property type="project" value="Ensembl"/>
</dbReference>
<dbReference type="FunFam" id="1.25.10.10:FF:001255">
    <property type="entry name" value="Exportin 1"/>
    <property type="match status" value="1"/>
</dbReference>
<dbReference type="Gene3D" id="1.25.10.10">
    <property type="entry name" value="Leucine-rich Repeat Variant"/>
    <property type="match status" value="1"/>
</dbReference>
<dbReference type="IDEAL" id="IID50151"/>
<dbReference type="InterPro" id="IPR011989">
    <property type="entry name" value="ARM-like"/>
</dbReference>
<dbReference type="InterPro" id="IPR016024">
    <property type="entry name" value="ARM-type_fold"/>
</dbReference>
<dbReference type="InterPro" id="IPR041123">
    <property type="entry name" value="CRM1_repeat"/>
</dbReference>
<dbReference type="InterPro" id="IPR041235">
    <property type="entry name" value="Exp1_repeat_2"/>
</dbReference>
<dbReference type="InterPro" id="IPR013598">
    <property type="entry name" value="Exportin-1/Importin-b-like"/>
</dbReference>
<dbReference type="InterPro" id="IPR001494">
    <property type="entry name" value="Importin-beta_N"/>
</dbReference>
<dbReference type="InterPro" id="IPR045065">
    <property type="entry name" value="XPO1/5"/>
</dbReference>
<dbReference type="InterPro" id="IPR014877">
    <property type="entry name" value="XPO1_C_dom"/>
</dbReference>
<dbReference type="InterPro" id="IPR040485">
    <property type="entry name" value="XPO1_repeat_3"/>
</dbReference>
<dbReference type="PANTHER" id="PTHR11223">
    <property type="entry name" value="EXPORTIN 1/5"/>
    <property type="match status" value="1"/>
</dbReference>
<dbReference type="PANTHER" id="PTHR11223:SF2">
    <property type="entry name" value="EXPORTIN-1"/>
    <property type="match status" value="1"/>
</dbReference>
<dbReference type="Pfam" id="PF08767">
    <property type="entry name" value="CRM1_C"/>
    <property type="match status" value="1"/>
</dbReference>
<dbReference type="Pfam" id="PF18777">
    <property type="entry name" value="CRM1_repeat"/>
    <property type="match status" value="1"/>
</dbReference>
<dbReference type="Pfam" id="PF18784">
    <property type="entry name" value="CRM1_repeat_2"/>
    <property type="match status" value="1"/>
</dbReference>
<dbReference type="Pfam" id="PF18787">
    <property type="entry name" value="CRM1_repeat_3"/>
    <property type="match status" value="1"/>
</dbReference>
<dbReference type="Pfam" id="PF03810">
    <property type="entry name" value="IBN_N"/>
    <property type="match status" value="1"/>
</dbReference>
<dbReference type="Pfam" id="PF08389">
    <property type="entry name" value="Xpo1"/>
    <property type="match status" value="1"/>
</dbReference>
<dbReference type="SMART" id="SM01102">
    <property type="entry name" value="CRM1_C"/>
    <property type="match status" value="1"/>
</dbReference>
<dbReference type="SMART" id="SM00913">
    <property type="entry name" value="IBN_N"/>
    <property type="match status" value="1"/>
</dbReference>
<dbReference type="SUPFAM" id="SSF48371">
    <property type="entry name" value="ARM repeat"/>
    <property type="match status" value="2"/>
</dbReference>
<dbReference type="PROSITE" id="PS50166">
    <property type="entry name" value="IMPORTIN_B_NT"/>
    <property type="match status" value="1"/>
</dbReference>
<reference key="1">
    <citation type="journal article" date="2004" name="Genome Res.">
        <title>The status, quality, and expansion of the NIH full-length cDNA project: the Mammalian Gene Collection (MGC).</title>
        <authorList>
            <consortium name="The MGC Project Team"/>
        </authorList>
    </citation>
    <scope>NUCLEOTIDE SEQUENCE [LARGE SCALE MRNA]</scope>
    <source>
        <strain>C57BL/6J</strain>
        <tissue>Brain</tissue>
    </source>
</reference>
<reference key="2">
    <citation type="journal article" date="2000" name="Cell">
        <title>PHAX, a mediator of U snRNA nuclear export whose activity is regulated by phosphorylation.</title>
        <authorList>
            <person name="Ohno M."/>
            <person name="Segref A."/>
            <person name="Bachi A."/>
            <person name="Wilm M."/>
            <person name="Mattaj I.W."/>
        </authorList>
    </citation>
    <scope>IDENTIFICATION IN A U SNRNA EXPORT COMPLEX WITH NCBP1; NCBP2; RAN; PHAX AND M7G-CAPPED RNA</scope>
</reference>
<reference key="3">
    <citation type="journal article" date="2010" name="Cell">
        <title>A tissue-specific atlas of mouse protein phosphorylation and expression.</title>
        <authorList>
            <person name="Huttlin E.L."/>
            <person name="Jedrychowski M.P."/>
            <person name="Elias J.E."/>
            <person name="Goswami T."/>
            <person name="Rad R."/>
            <person name="Beausoleil S.A."/>
            <person name="Villen J."/>
            <person name="Haas W."/>
            <person name="Sowa M.E."/>
            <person name="Gygi S.P."/>
        </authorList>
    </citation>
    <scope>IDENTIFICATION BY MASS SPECTROMETRY [LARGE SCALE ANALYSIS]</scope>
    <source>
        <tissue>Brain</tissue>
        <tissue>Brown adipose tissue</tissue>
        <tissue>Heart</tissue>
        <tissue>Kidney</tissue>
        <tissue>Liver</tissue>
        <tissue>Lung</tissue>
        <tissue>Pancreas</tissue>
        <tissue>Spleen</tissue>
        <tissue>Testis</tissue>
    </source>
</reference>
<reference key="4">
    <citation type="journal article" date="2010" name="J. Biol. Chem.">
        <title>Nucleocytoplasmic shuttling of dysbindin-1, a schizophrenia-related protein, regulates synapsin I expression.</title>
        <authorList>
            <person name="Fei E."/>
            <person name="Ma X."/>
            <person name="Zhu C."/>
            <person name="Xue T."/>
            <person name="Yan J."/>
            <person name="Xu Y."/>
            <person name="Zhou J."/>
            <person name="Wang G."/>
        </authorList>
    </citation>
    <scope>INTERACTION WITH DTNBP1</scope>
    <scope>FUNCTION</scope>
</reference>
<reference key="5">
    <citation type="journal article" date="2013" name="Mol. Cell">
        <title>SIRT5-mediated lysine desuccinylation impacts diverse metabolic pathways.</title>
        <authorList>
            <person name="Park J."/>
            <person name="Chen Y."/>
            <person name="Tishkoff D.X."/>
            <person name="Peng C."/>
            <person name="Tan M."/>
            <person name="Dai L."/>
            <person name="Xie Z."/>
            <person name="Zhang Y."/>
            <person name="Zwaans B.M."/>
            <person name="Skinner M.E."/>
            <person name="Lombard D.B."/>
            <person name="Zhao Y."/>
        </authorList>
    </citation>
    <scope>ACETYLATION [LARGE SCALE ANALYSIS] AT LYS-446</scope>
    <scope>IDENTIFICATION BY MASS SPECTROMETRY [LARGE SCALE ANALYSIS]</scope>
    <source>
        <tissue>Embryonic fibroblast</tissue>
    </source>
</reference>
<comment type="function">
    <text evidence="1 6">Mediates the nuclear export of cellular proteins (cargos) bearing a leucine-rich nuclear export signal (NES) and of RNAs. In the nucleus, in association with RANBP3, binds cooperatively to the NES on its target protein and to the GTPase Ran in its active GTP-bound form. Docking of this complex to the nuclear pore complex (NPC) is mediated through binding to nucleoporins. Upon transit of a nuclear export complex into the cytoplasm, disassembling of the complex and hydrolysis of Ran-GTP to Ran-GDP (induced by RANBP1 and RANGAP1, respectively) cause release of the cargo from the export receptor. The directionality of nuclear export is thought to be conferred by an asymmetric distribution of the GTP- and GDP-bound forms of Ran between the cytoplasm and nucleus. Involved in U3 snoRNA transport from Cajal bodies to nucleoli. Binds to late precursor U3 snoRNA bearing a TMG cap (By similarity).</text>
</comment>
<comment type="subunit">
    <text evidence="2 5 6">Found in a U snRNA export complex with PHAX/RNUXA, NCBP1/CBP80, NCBP2/CBP20, RAN, XPO1 and m7G-capped RNA (PubMed:10786834). Component of a nuclear export receptor complex composed of KPNB1, RAN, SNUPN and XPO1. Found in a trimeric export complex with SNUPN, RAN and XPO1. Found in a nuclear export complex with RANBP3 and RAN. Found in a 60S ribosomal subunit export complex with NMD3, RAN, XPO1. Interacts with DDX3X, NMD3, NUP42, NUP88, NUP214, RANBP3 and TERT. Interacts with NEMF (via its N-terminus). Interacts with the monomeric form of BIRC5/survivin deacetylated at 'Lys-129'. Interacts with SERTAD2; the interaction translocates SERTAD2 out of the nucleus. Interacts with ATF2. Interacts with SLC35G1 and STIM1. Interacts with DCAF8 (By similarity). Interacts with DTNBP1 and the interaction translocates DTNBP1 out of the nucleus (PubMed:20921223). Interacts with CPEB3 (By similarity). Interacts with HAX1 (By similarity). Interacts with BOK; translocates to the cytoplasm (By similarity). Interacts with HSP90AB1 (By similarity). Interacts with LRPPRC; interacts with LRPPRC alone and also when LRPPRC is in complex with EIF4E and with EIF4E sensitivity element (4ESE)-containing mRNAs to form an EIF4E-dependent mRNA export complex (By similarity).</text>
</comment>
<comment type="interaction">
    <interactant intactId="EBI-2550236">
        <id>Q6P5F9</id>
    </interactant>
    <interactant intactId="EBI-11607516">
        <id>Q6GNU1</id>
        <label>arpc1b-b</label>
    </interactant>
    <organismsDiffer>true</organismsDiffer>
    <experiments>2</experiments>
</comment>
<comment type="interaction">
    <interactant intactId="EBI-2550236">
        <id>Q6P5F9</id>
    </interactant>
    <interactant intactId="EBI-11608794">
        <id>Q3B8L5</id>
        <label>LOC495502</label>
    </interactant>
    <organismsDiffer>true</organismsDiffer>
    <experiments>2</experiments>
</comment>
<comment type="interaction">
    <interactant intactId="EBI-2550236">
        <id>Q6P5F9</id>
    </interactant>
    <interactant intactId="EBI-389668">
        <id>Q00987</id>
        <label>MDM2</label>
    </interactant>
    <organismsDiffer>true</organismsDiffer>
    <experiments>4</experiments>
</comment>
<comment type="interaction">
    <interactant intactId="EBI-2550236">
        <id>Q6P5F9</id>
    </interactant>
    <interactant intactId="EBI-9673535">
        <id>P0DJZ2</id>
        <label>NS2</label>
    </interactant>
    <organismsDiffer>true</organismsDiffer>
    <experiments>2</experiments>
</comment>
<comment type="interaction">
    <interactant intactId="EBI-2550236">
        <id>Q6P5F9</id>
    </interactant>
    <interactant intactId="EBI-2682139">
        <id>P61925</id>
        <label>PKIA</label>
    </interactant>
    <organismsDiffer>true</organismsDiffer>
    <experiments>4</experiments>
</comment>
<comment type="interaction">
    <interactant intactId="EBI-2550236">
        <id>Q6P5F9</id>
    </interactant>
    <interactant intactId="EBI-286642">
        <id>P62826</id>
        <label>RAN</label>
    </interactant>
    <organismsDiffer>true</organismsDiffer>
    <experiments>3</experiments>
</comment>
<comment type="interaction">
    <interactant intactId="EBI-2550236">
        <id>Q6P5F9</id>
    </interactant>
    <interactant intactId="EBI-11608460">
        <id>B7ZR20</id>
        <label>septin2.L</label>
    </interactant>
    <organismsDiffer>true</organismsDiffer>
    <experiments>2</experiments>
</comment>
<comment type="interaction">
    <interactant intactId="EBI-2550236">
        <id>Q6P5F9</id>
    </interactant>
    <interactant intactId="EBI-714033">
        <id>O95149</id>
        <label>SNUPN</label>
    </interactant>
    <organismsDiffer>true</organismsDiffer>
    <experiments>2</experiments>
</comment>
<comment type="interaction">
    <interactant intactId="EBI-2550236">
        <id>Q6P5F9</id>
    </interactant>
    <interactant intactId="EBI-11606693">
        <id>Q91855</id>
        <label>SUP35</label>
    </interactant>
    <organismsDiffer>true</organismsDiffer>
    <experiments>2</experiments>
</comment>
<comment type="subcellular location">
    <subcellularLocation>
        <location evidence="1">Cytoplasm</location>
    </subcellularLocation>
    <subcellularLocation>
        <location evidence="1">Nucleus</location>
        <location evidence="1">Nucleoplasm</location>
    </subcellularLocation>
    <subcellularLocation>
        <location evidence="1">Nucleus</location>
        <location evidence="1">Cajal body</location>
    </subcellularLocation>
    <subcellularLocation>
        <location evidence="1">Nucleus</location>
        <location evidence="1">Nucleolus</location>
    </subcellularLocation>
    <text evidence="1">Located in the nucleoplasm, Cajal bodies and nucleoli. Shuttles between the nucleus/nucleolus and the cytoplasm (By similarity).</text>
</comment>
<comment type="similarity">
    <text evidence="7">Belongs to the exportin family.</text>
</comment>
<feature type="chain" id="PRO_0000204706" description="Exportin-1">
    <location>
        <begin position="1"/>
        <end position="1071"/>
    </location>
</feature>
<feature type="domain" description="Importin N-terminal" evidence="4">
    <location>
        <begin position="46"/>
        <end position="112"/>
    </location>
</feature>
<feature type="repeat" description="HEAT 1">
    <location>
        <begin position="217"/>
        <end position="240"/>
    </location>
</feature>
<feature type="repeat" description="HEAT 2">
    <location>
        <begin position="241"/>
        <end position="277"/>
    </location>
</feature>
<feature type="repeat" description="HEAT 3">
    <location>
        <begin position="354"/>
        <end position="472"/>
    </location>
</feature>
<feature type="repeat" description="HEAT 4">
    <location>
        <begin position="515"/>
        <end position="553"/>
    </location>
</feature>
<feature type="repeat" description="HEAT 5">
    <location>
        <begin position="560"/>
        <end position="597"/>
    </location>
</feature>
<feature type="repeat" description="HEAT 6">
    <location>
        <begin position="602"/>
        <end position="639"/>
    </location>
</feature>
<feature type="repeat" description="HEAT 7">
    <location>
        <begin position="775"/>
        <end position="813"/>
    </location>
</feature>
<feature type="repeat" description="HEAT 8">
    <location>
        <begin position="885"/>
        <end position="916"/>
    </location>
</feature>
<feature type="repeat" description="HEAT 9">
    <location>
        <begin position="917"/>
        <end position="954"/>
    </location>
</feature>
<feature type="repeat" description="HEAT 10">
    <location>
        <begin position="1002"/>
        <end position="1039"/>
    </location>
</feature>
<feature type="region of interest" description="Necessary for interaction with Ran and nuclear export complex formation" evidence="1">
    <location>
        <begin position="327"/>
        <end position="450"/>
    </location>
</feature>
<feature type="region of interest" description="Necessary for interaction with RANBP3" evidence="1">
    <location>
        <begin position="411"/>
        <end position="481"/>
    </location>
</feature>
<feature type="modified residue" description="Phosphoserine" evidence="2">
    <location>
        <position position="391"/>
    </location>
</feature>
<feature type="modified residue" description="N6-acetyllysine" evidence="8">
    <location>
        <position position="446"/>
    </location>
</feature>
<feature type="modified residue" description="Phosphothreonine" evidence="3">
    <location>
        <position position="448"/>
    </location>
</feature>
<feature type="modified residue" description="Phosphoserine" evidence="3">
    <location>
        <position position="450"/>
    </location>
</feature>
<feature type="modified residue" description="Phosphotyrosine" evidence="3">
    <location>
        <position position="454"/>
    </location>
</feature>
<feature type="modified residue" description="N6-acetyllysine" evidence="2">
    <location>
        <position position="693"/>
    </location>
</feature>
<feature type="modified residue" description="Phosphoserine" evidence="2">
    <location>
        <position position="1031"/>
    </location>
</feature>
<feature type="strand" evidence="9">
    <location>
        <begin position="18"/>
        <end position="20"/>
    </location>
</feature>
<feature type="helix" evidence="9">
    <location>
        <begin position="25"/>
        <end position="33"/>
    </location>
</feature>
<feature type="turn" evidence="9">
    <location>
        <begin position="34"/>
        <end position="36"/>
    </location>
</feature>
<feature type="helix" evidence="9">
    <location>
        <begin position="40"/>
        <end position="51"/>
    </location>
</feature>
<feature type="turn" evidence="12">
    <location>
        <begin position="52"/>
        <end position="54"/>
    </location>
</feature>
<feature type="strand" evidence="12">
    <location>
        <begin position="55"/>
        <end position="57"/>
    </location>
</feature>
<feature type="helix" evidence="9">
    <location>
        <begin position="59"/>
        <end position="63"/>
    </location>
</feature>
<feature type="helix" evidence="9">
    <location>
        <begin position="73"/>
        <end position="89"/>
    </location>
</feature>
<feature type="helix" evidence="9">
    <location>
        <begin position="91"/>
        <end position="93"/>
    </location>
</feature>
<feature type="helix" evidence="9">
    <location>
        <begin position="96"/>
        <end position="114"/>
    </location>
</feature>
<feature type="helix" evidence="9">
    <location>
        <begin position="117"/>
        <end position="120"/>
    </location>
</feature>
<feature type="helix" evidence="9">
    <location>
        <begin position="124"/>
        <end position="141"/>
    </location>
</feature>
<feature type="turn" evidence="9">
    <location>
        <begin position="142"/>
        <end position="145"/>
    </location>
</feature>
<feature type="helix" evidence="9">
    <location>
        <begin position="149"/>
        <end position="159"/>
    </location>
</feature>
<feature type="helix" evidence="9">
    <location>
        <begin position="161"/>
        <end position="178"/>
    </location>
</feature>
<feature type="helix" evidence="9">
    <location>
        <begin position="182"/>
        <end position="185"/>
    </location>
</feature>
<feature type="helix" evidence="9">
    <location>
        <begin position="188"/>
        <end position="200"/>
    </location>
</feature>
<feature type="helix" evidence="9">
    <location>
        <begin position="203"/>
        <end position="215"/>
    </location>
</feature>
<feature type="helix" evidence="9">
    <location>
        <begin position="219"/>
        <end position="232"/>
    </location>
</feature>
<feature type="turn" evidence="9">
    <location>
        <begin position="233"/>
        <end position="235"/>
    </location>
</feature>
<feature type="helix" evidence="9">
    <location>
        <begin position="239"/>
        <end position="242"/>
    </location>
</feature>
<feature type="strand" evidence="9">
    <location>
        <begin position="243"/>
        <end position="245"/>
    </location>
</feature>
<feature type="helix" evidence="9">
    <location>
        <begin position="246"/>
        <end position="253"/>
    </location>
</feature>
<feature type="strand" evidence="9">
    <location>
        <begin position="255"/>
        <end position="257"/>
    </location>
</feature>
<feature type="helix" evidence="9">
    <location>
        <begin position="258"/>
        <end position="273"/>
    </location>
</feature>
<feature type="helix" evidence="9">
    <location>
        <begin position="277"/>
        <end position="279"/>
    </location>
</feature>
<feature type="helix" evidence="9">
    <location>
        <begin position="280"/>
        <end position="297"/>
    </location>
</feature>
<feature type="strand" evidence="10">
    <location>
        <begin position="300"/>
        <end position="302"/>
    </location>
</feature>
<feature type="helix" evidence="9">
    <location>
        <begin position="304"/>
        <end position="309"/>
    </location>
</feature>
<feature type="helix" evidence="9">
    <location>
        <begin position="315"/>
        <end position="339"/>
    </location>
</feature>
<feature type="helix" evidence="9">
    <location>
        <begin position="341"/>
        <end position="343"/>
    </location>
</feature>
<feature type="helix" evidence="9">
    <location>
        <begin position="344"/>
        <end position="357"/>
    </location>
</feature>
<feature type="helix" evidence="9">
    <location>
        <begin position="363"/>
        <end position="383"/>
    </location>
</feature>
<feature type="helix" evidence="9">
    <location>
        <begin position="404"/>
        <end position="407"/>
    </location>
</feature>
<feature type="helix" evidence="9">
    <location>
        <begin position="410"/>
        <end position="422"/>
    </location>
</feature>
<feature type="strand" evidence="9">
    <location>
        <begin position="430"/>
        <end position="434"/>
    </location>
</feature>
<feature type="strand" evidence="9">
    <location>
        <begin position="436"/>
        <end position="438"/>
    </location>
</feature>
<feature type="strand" evidence="9">
    <location>
        <begin position="440"/>
        <end position="444"/>
    </location>
</feature>
<feature type="helix" evidence="9">
    <location>
        <begin position="449"/>
        <end position="467"/>
    </location>
</feature>
<feature type="helix" evidence="9">
    <location>
        <begin position="469"/>
        <end position="484"/>
    </location>
</feature>
<feature type="helix" evidence="9">
    <location>
        <begin position="491"/>
        <end position="503"/>
    </location>
</feature>
<feature type="turn" evidence="9">
    <location>
        <begin position="504"/>
        <end position="506"/>
    </location>
</feature>
<feature type="helix" evidence="9">
    <location>
        <begin position="510"/>
        <end position="530"/>
    </location>
</feature>
<feature type="helix" evidence="9">
    <location>
        <begin position="534"/>
        <end position="550"/>
    </location>
</feature>
<feature type="helix" evidence="9">
    <location>
        <begin position="552"/>
        <end position="557"/>
    </location>
</feature>
<feature type="helix" evidence="9">
    <location>
        <begin position="559"/>
        <end position="572"/>
    </location>
</feature>
<feature type="helix" evidence="9">
    <location>
        <begin position="580"/>
        <end position="594"/>
    </location>
</feature>
<feature type="helix" evidence="9">
    <location>
        <begin position="596"/>
        <end position="599"/>
    </location>
</feature>
<feature type="helix" evidence="9">
    <location>
        <begin position="610"/>
        <end position="615"/>
    </location>
</feature>
<feature type="helix" evidence="9">
    <location>
        <begin position="618"/>
        <end position="622"/>
    </location>
</feature>
<feature type="helix" evidence="9">
    <location>
        <begin position="627"/>
        <end position="641"/>
    </location>
</feature>
<feature type="helix" evidence="9">
    <location>
        <begin position="647"/>
        <end position="657"/>
    </location>
</feature>
<feature type="helix" evidence="9">
    <location>
        <begin position="659"/>
        <end position="674"/>
    </location>
</feature>
<feature type="helix" evidence="9">
    <location>
        <begin position="676"/>
        <end position="680"/>
    </location>
</feature>
<feature type="helix" evidence="9">
    <location>
        <begin position="682"/>
        <end position="702"/>
    </location>
</feature>
<feature type="helix" evidence="9">
    <location>
        <begin position="704"/>
        <end position="706"/>
    </location>
</feature>
<feature type="helix" evidence="9">
    <location>
        <begin position="707"/>
        <end position="735"/>
    </location>
</feature>
<feature type="helix" evidence="9">
    <location>
        <begin position="737"/>
        <end position="740"/>
    </location>
</feature>
<feature type="helix" evidence="9">
    <location>
        <begin position="743"/>
        <end position="763"/>
    </location>
</feature>
<feature type="helix" evidence="9">
    <location>
        <begin position="769"/>
        <end position="775"/>
    </location>
</feature>
<feature type="helix" evidence="9">
    <location>
        <begin position="778"/>
        <end position="783"/>
    </location>
</feature>
<feature type="helix" evidence="9">
    <location>
        <begin position="785"/>
        <end position="790"/>
    </location>
</feature>
<feature type="helix" evidence="9">
    <location>
        <begin position="793"/>
        <end position="795"/>
    </location>
</feature>
<feature type="helix" evidence="9">
    <location>
        <begin position="799"/>
        <end position="811"/>
    </location>
</feature>
<feature type="helix" evidence="9">
    <location>
        <begin position="812"/>
        <end position="814"/>
    </location>
</feature>
<feature type="helix" evidence="9">
    <location>
        <begin position="816"/>
        <end position="818"/>
    </location>
</feature>
<feature type="helix" evidence="9">
    <location>
        <begin position="819"/>
        <end position="834"/>
    </location>
</feature>
<feature type="strand" evidence="9">
    <location>
        <begin position="838"/>
        <end position="840"/>
    </location>
</feature>
<feature type="helix" evidence="9">
    <location>
        <begin position="842"/>
        <end position="858"/>
    </location>
</feature>
<feature type="helix" evidence="9">
    <location>
        <begin position="860"/>
        <end position="862"/>
    </location>
</feature>
<feature type="turn" evidence="9">
    <location>
        <begin position="863"/>
        <end position="865"/>
    </location>
</feature>
<feature type="helix" evidence="9">
    <location>
        <begin position="868"/>
        <end position="882"/>
    </location>
</feature>
<feature type="helix" evidence="9">
    <location>
        <begin position="887"/>
        <end position="904"/>
    </location>
</feature>
<feature type="helix" evidence="9">
    <location>
        <begin position="908"/>
        <end position="930"/>
    </location>
</feature>
<feature type="helix" evidence="9">
    <location>
        <begin position="936"/>
        <end position="938"/>
    </location>
</feature>
<feature type="helix" evidence="9">
    <location>
        <begin position="939"/>
        <end position="953"/>
    </location>
</feature>
<feature type="turn" evidence="11">
    <location>
        <begin position="954"/>
        <end position="956"/>
    </location>
</feature>
<feature type="strand" evidence="9">
    <location>
        <begin position="961"/>
        <end position="963"/>
    </location>
</feature>
<feature type="turn" evidence="9">
    <location>
        <begin position="965"/>
        <end position="968"/>
    </location>
</feature>
<feature type="helix" evidence="9">
    <location>
        <begin position="970"/>
        <end position="985"/>
    </location>
</feature>
<feature type="strand" evidence="10">
    <location>
        <begin position="987"/>
        <end position="989"/>
    </location>
</feature>
<feature type="helix" evidence="9">
    <location>
        <begin position="991"/>
        <end position="1003"/>
    </location>
</feature>
<feature type="turn" evidence="12">
    <location>
        <begin position="1004"/>
        <end position="1006"/>
    </location>
</feature>
<feature type="helix" evidence="9">
    <location>
        <begin position="1008"/>
        <end position="1022"/>
    </location>
</feature>
<feature type="turn" evidence="9">
    <location>
        <begin position="1027"/>
        <end position="1029"/>
    </location>
</feature>
<feature type="helix" evidence="9">
    <location>
        <begin position="1037"/>
        <end position="1052"/>
    </location>
</feature>
<accession>Q6P5F9</accession>
<keyword id="KW-0002">3D-structure</keyword>
<keyword id="KW-0007">Acetylation</keyword>
<keyword id="KW-0963">Cytoplasm</keyword>
<keyword id="KW-0509">mRNA transport</keyword>
<keyword id="KW-0539">Nucleus</keyword>
<keyword id="KW-0597">Phosphoprotein</keyword>
<keyword id="KW-0653">Protein transport</keyword>
<keyword id="KW-1185">Reference proteome</keyword>
<keyword id="KW-0677">Repeat</keyword>
<keyword id="KW-0694">RNA-binding</keyword>
<keyword id="KW-0813">Transport</keyword>
<organism>
    <name type="scientific">Mus musculus</name>
    <name type="common">Mouse</name>
    <dbReference type="NCBI Taxonomy" id="10090"/>
    <lineage>
        <taxon>Eukaryota</taxon>
        <taxon>Metazoa</taxon>
        <taxon>Chordata</taxon>
        <taxon>Craniata</taxon>
        <taxon>Vertebrata</taxon>
        <taxon>Euteleostomi</taxon>
        <taxon>Mammalia</taxon>
        <taxon>Eutheria</taxon>
        <taxon>Euarchontoglires</taxon>
        <taxon>Glires</taxon>
        <taxon>Rodentia</taxon>
        <taxon>Myomorpha</taxon>
        <taxon>Muroidea</taxon>
        <taxon>Muridae</taxon>
        <taxon>Murinae</taxon>
        <taxon>Mus</taxon>
        <taxon>Mus</taxon>
    </lineage>
</organism>
<gene>
    <name type="primary">Xpo1</name>
    <name type="synonym">Crm1</name>
</gene>
<protein>
    <recommendedName>
        <fullName>Exportin-1</fullName>
        <shortName>Exp1</shortName>
    </recommendedName>
    <alternativeName>
        <fullName>Chromosome region maintenance 1 protein homolog</fullName>
    </alternativeName>
</protein>